<organism>
    <name type="scientific">Dichelobacter nodosus (strain VCS1703A)</name>
    <dbReference type="NCBI Taxonomy" id="246195"/>
    <lineage>
        <taxon>Bacteria</taxon>
        <taxon>Pseudomonadati</taxon>
        <taxon>Pseudomonadota</taxon>
        <taxon>Gammaproteobacteria</taxon>
        <taxon>Cardiobacteriales</taxon>
        <taxon>Cardiobacteriaceae</taxon>
        <taxon>Dichelobacter</taxon>
    </lineage>
</organism>
<feature type="chain" id="PRO_0000368463" description="ATP synthase subunit b">
    <location>
        <begin position="1"/>
        <end position="156"/>
    </location>
</feature>
<feature type="transmembrane region" description="Helical" evidence="1">
    <location>
        <begin position="7"/>
        <end position="29"/>
    </location>
</feature>
<evidence type="ECO:0000255" key="1">
    <source>
        <dbReference type="HAMAP-Rule" id="MF_01398"/>
    </source>
</evidence>
<protein>
    <recommendedName>
        <fullName evidence="1">ATP synthase subunit b</fullName>
    </recommendedName>
    <alternativeName>
        <fullName evidence="1">ATP synthase F(0) sector subunit b</fullName>
    </alternativeName>
    <alternativeName>
        <fullName evidence="1">ATPase subunit I</fullName>
    </alternativeName>
    <alternativeName>
        <fullName evidence="1">F-type ATPase subunit b</fullName>
        <shortName evidence="1">F-ATPase subunit b</shortName>
    </alternativeName>
</protein>
<dbReference type="EMBL" id="CP000513">
    <property type="protein sequence ID" value="ABQ14220.1"/>
    <property type="molecule type" value="Genomic_DNA"/>
</dbReference>
<dbReference type="RefSeq" id="WP_012031450.1">
    <property type="nucleotide sequence ID" value="NC_009446.1"/>
</dbReference>
<dbReference type="SMR" id="A5EXJ9"/>
<dbReference type="STRING" id="246195.DNO_1146"/>
<dbReference type="KEGG" id="dno:DNO_1146"/>
<dbReference type="eggNOG" id="COG0711">
    <property type="taxonomic scope" value="Bacteria"/>
</dbReference>
<dbReference type="HOGENOM" id="CLU_079215_4_5_6"/>
<dbReference type="OrthoDB" id="9788020at2"/>
<dbReference type="Proteomes" id="UP000000248">
    <property type="component" value="Chromosome"/>
</dbReference>
<dbReference type="GO" id="GO:0005886">
    <property type="term" value="C:plasma membrane"/>
    <property type="evidence" value="ECO:0007669"/>
    <property type="project" value="UniProtKB-SubCell"/>
</dbReference>
<dbReference type="GO" id="GO:0045259">
    <property type="term" value="C:proton-transporting ATP synthase complex"/>
    <property type="evidence" value="ECO:0007669"/>
    <property type="project" value="UniProtKB-KW"/>
</dbReference>
<dbReference type="GO" id="GO:0046933">
    <property type="term" value="F:proton-transporting ATP synthase activity, rotational mechanism"/>
    <property type="evidence" value="ECO:0007669"/>
    <property type="project" value="UniProtKB-UniRule"/>
</dbReference>
<dbReference type="GO" id="GO:0046961">
    <property type="term" value="F:proton-transporting ATPase activity, rotational mechanism"/>
    <property type="evidence" value="ECO:0007669"/>
    <property type="project" value="TreeGrafter"/>
</dbReference>
<dbReference type="CDD" id="cd06503">
    <property type="entry name" value="ATP-synt_Fo_b"/>
    <property type="match status" value="1"/>
</dbReference>
<dbReference type="Gene3D" id="6.10.250.1580">
    <property type="match status" value="1"/>
</dbReference>
<dbReference type="HAMAP" id="MF_01398">
    <property type="entry name" value="ATP_synth_b_bprime"/>
    <property type="match status" value="1"/>
</dbReference>
<dbReference type="InterPro" id="IPR028987">
    <property type="entry name" value="ATP_synth_B-like_membr_sf"/>
</dbReference>
<dbReference type="InterPro" id="IPR002146">
    <property type="entry name" value="ATP_synth_b/b'su_bac/chlpt"/>
</dbReference>
<dbReference type="InterPro" id="IPR005864">
    <property type="entry name" value="ATP_synth_F0_bsu_bac"/>
</dbReference>
<dbReference type="InterPro" id="IPR050059">
    <property type="entry name" value="ATP_synthase_B_chain"/>
</dbReference>
<dbReference type="NCBIfam" id="TIGR01144">
    <property type="entry name" value="ATP_synt_b"/>
    <property type="match status" value="1"/>
</dbReference>
<dbReference type="NCBIfam" id="NF004411">
    <property type="entry name" value="PRK05759.1-2"/>
    <property type="match status" value="1"/>
</dbReference>
<dbReference type="PANTHER" id="PTHR33445:SF1">
    <property type="entry name" value="ATP SYNTHASE SUBUNIT B"/>
    <property type="match status" value="1"/>
</dbReference>
<dbReference type="PANTHER" id="PTHR33445">
    <property type="entry name" value="ATP SYNTHASE SUBUNIT B', CHLOROPLASTIC"/>
    <property type="match status" value="1"/>
</dbReference>
<dbReference type="Pfam" id="PF00430">
    <property type="entry name" value="ATP-synt_B"/>
    <property type="match status" value="1"/>
</dbReference>
<dbReference type="SUPFAM" id="SSF81573">
    <property type="entry name" value="F1F0 ATP synthase subunit B, membrane domain"/>
    <property type="match status" value="1"/>
</dbReference>
<reference key="1">
    <citation type="journal article" date="2007" name="Nat. Biotechnol.">
        <title>Genome sequence and identification of candidate vaccine antigens from the animal pathogen Dichelobacter nodosus.</title>
        <authorList>
            <person name="Myers G.S.A."/>
            <person name="Parker D."/>
            <person name="Al-Hasani K."/>
            <person name="Kennan R.M."/>
            <person name="Seemann T."/>
            <person name="Ren Q."/>
            <person name="Badger J.H."/>
            <person name="Selengut J.D."/>
            <person name="Deboy R.T."/>
            <person name="Tettelin H."/>
            <person name="Boyce J.D."/>
            <person name="McCarl V.P."/>
            <person name="Han X."/>
            <person name="Nelson W.C."/>
            <person name="Madupu R."/>
            <person name="Mohamoud Y."/>
            <person name="Holley T."/>
            <person name="Fedorova N."/>
            <person name="Khouri H."/>
            <person name="Bottomley S.P."/>
            <person name="Whittington R.J."/>
            <person name="Adler B."/>
            <person name="Songer J.G."/>
            <person name="Rood J.I."/>
            <person name="Paulsen I.T."/>
        </authorList>
    </citation>
    <scope>NUCLEOTIDE SEQUENCE [LARGE SCALE GENOMIC DNA]</scope>
    <source>
        <strain>VCS1703A</strain>
    </source>
</reference>
<accession>A5EXJ9</accession>
<sequence length="156" mass="17893">MNINVTLIGQMGTFLVFWWFVNKVIWPMFANIATERQRKIADGLNMADKAKFAVQEAEHQSQEILSKAKMQAAEIVSRANKEASEMIAQAKEQAQRSSEAEVLQAHVQIEQEKRQVRDELRAQLSHLVIAGAEKVLGREVNDRDHERLLHELTEKF</sequence>
<keyword id="KW-0066">ATP synthesis</keyword>
<keyword id="KW-0997">Cell inner membrane</keyword>
<keyword id="KW-1003">Cell membrane</keyword>
<keyword id="KW-0138">CF(0)</keyword>
<keyword id="KW-0375">Hydrogen ion transport</keyword>
<keyword id="KW-0406">Ion transport</keyword>
<keyword id="KW-0472">Membrane</keyword>
<keyword id="KW-1185">Reference proteome</keyword>
<keyword id="KW-0812">Transmembrane</keyword>
<keyword id="KW-1133">Transmembrane helix</keyword>
<keyword id="KW-0813">Transport</keyword>
<comment type="function">
    <text evidence="1">F(1)F(0) ATP synthase produces ATP from ADP in the presence of a proton or sodium gradient. F-type ATPases consist of two structural domains, F(1) containing the extramembraneous catalytic core and F(0) containing the membrane proton channel, linked together by a central stalk and a peripheral stalk. During catalysis, ATP synthesis in the catalytic domain of F(1) is coupled via a rotary mechanism of the central stalk subunits to proton translocation.</text>
</comment>
<comment type="function">
    <text evidence="1">Component of the F(0) channel, it forms part of the peripheral stalk, linking F(1) to F(0).</text>
</comment>
<comment type="subunit">
    <text evidence="1">F-type ATPases have 2 components, F(1) - the catalytic core - and F(0) - the membrane proton channel. F(1) has five subunits: alpha(3), beta(3), gamma(1), delta(1), epsilon(1). F(0) has three main subunits: a(1), b(2) and c(10-14). The alpha and beta chains form an alternating ring which encloses part of the gamma chain. F(1) is attached to F(0) by a central stalk formed by the gamma and epsilon chains, while a peripheral stalk is formed by the delta and b chains.</text>
</comment>
<comment type="subcellular location">
    <subcellularLocation>
        <location evidence="1">Cell inner membrane</location>
        <topology evidence="1">Single-pass membrane protein</topology>
    </subcellularLocation>
</comment>
<comment type="similarity">
    <text evidence="1">Belongs to the ATPase B chain family.</text>
</comment>
<name>ATPF_DICNV</name>
<gene>
    <name evidence="1" type="primary">atpF</name>
    <name type="ordered locus">DNO_1146</name>
</gene>
<proteinExistence type="inferred from homology"/>